<protein>
    <recommendedName>
        <fullName evidence="1">Probable potassium transport system protein Kup</fullName>
    </recommendedName>
</protein>
<keyword id="KW-0997">Cell inner membrane</keyword>
<keyword id="KW-1003">Cell membrane</keyword>
<keyword id="KW-0406">Ion transport</keyword>
<keyword id="KW-0472">Membrane</keyword>
<keyword id="KW-0630">Potassium</keyword>
<keyword id="KW-0633">Potassium transport</keyword>
<keyword id="KW-0769">Symport</keyword>
<keyword id="KW-0812">Transmembrane</keyword>
<keyword id="KW-1133">Transmembrane helix</keyword>
<keyword id="KW-0813">Transport</keyword>
<organism>
    <name type="scientific">Bordetella parapertussis (strain 12822 / ATCC BAA-587 / NCTC 13253)</name>
    <dbReference type="NCBI Taxonomy" id="257311"/>
    <lineage>
        <taxon>Bacteria</taxon>
        <taxon>Pseudomonadati</taxon>
        <taxon>Pseudomonadota</taxon>
        <taxon>Betaproteobacteria</taxon>
        <taxon>Burkholderiales</taxon>
        <taxon>Alcaligenaceae</taxon>
        <taxon>Bordetella</taxon>
    </lineage>
</organism>
<name>KUP_BORPA</name>
<sequence>MTHTAAGAPRDAKTAIHAPSSRMALMLGALGVVYGDIGTSPLYTLRACLNTIDDLQPAHVLGVLSILFWLLMIVVSLKYVTLVLRADNRGEGGTLALLELAVRGREGRARWLLIVLGIFGAALFYGDSMITPAISVLSALEGISIVSHTLEPWVVPVALVVLVALFAIQSHGTGAVGKLFGPIMALWFATLAVLGGYQIWLTPEVLAALNPVWALRFIAEFPVMSFLLLGAVVLALTGAEALYADMGHFGRPAIRRAWFAMVLPALTLCYFGQGALLLRDPAAIRNPFFLMAPEWGLAALVGLATVATVVASQAVISGAFSVTRQAVQLGFWPRMQILHTSAVEKGQIYLPQVNALLLCAVLVLVLLFRNSENLAAAYGFAVTGTMLTTSVLAFAVLPRDSTGGKRVLWMVLLGALLVIDILLFGANIFKIHEGGWLPLLVGVVVFTLMMTWRRGRRLLADMQARDRQPLREFMTQLEAFPPARVQGTAIFMTMNAGNVPPALLHNLKHNKVLHDHVLFLSIRVADVPYVSEDERFEMHKISASSWQASINYGFKEDPDVPDALRQVAEAYPEIDLEPMRTSFYLSRQTVVAARRPAMARWRRALFAFMARNSTRSTRFFKIPPNRVVEMGMQVEL</sequence>
<accession>Q7W7H9</accession>
<dbReference type="EMBL" id="BX640430">
    <property type="protein sequence ID" value="CAE37834.1"/>
    <property type="molecule type" value="Genomic_DNA"/>
</dbReference>
<dbReference type="RefSeq" id="WP_003820366.1">
    <property type="nucleotide sequence ID" value="NC_002928.3"/>
</dbReference>
<dbReference type="GeneID" id="69600465"/>
<dbReference type="KEGG" id="bpa:BPP2540"/>
<dbReference type="HOGENOM" id="CLU_008142_4_2_4"/>
<dbReference type="Proteomes" id="UP000001421">
    <property type="component" value="Chromosome"/>
</dbReference>
<dbReference type="GO" id="GO:0005886">
    <property type="term" value="C:plasma membrane"/>
    <property type="evidence" value="ECO:0007669"/>
    <property type="project" value="UniProtKB-SubCell"/>
</dbReference>
<dbReference type="GO" id="GO:0015079">
    <property type="term" value="F:potassium ion transmembrane transporter activity"/>
    <property type="evidence" value="ECO:0007669"/>
    <property type="project" value="UniProtKB-UniRule"/>
</dbReference>
<dbReference type="GO" id="GO:0015293">
    <property type="term" value="F:symporter activity"/>
    <property type="evidence" value="ECO:0007669"/>
    <property type="project" value="UniProtKB-UniRule"/>
</dbReference>
<dbReference type="HAMAP" id="MF_01522">
    <property type="entry name" value="Kup"/>
    <property type="match status" value="1"/>
</dbReference>
<dbReference type="InterPro" id="IPR003855">
    <property type="entry name" value="K+_transporter"/>
</dbReference>
<dbReference type="InterPro" id="IPR053952">
    <property type="entry name" value="K_trans_C"/>
</dbReference>
<dbReference type="InterPro" id="IPR053951">
    <property type="entry name" value="K_trans_N"/>
</dbReference>
<dbReference type="InterPro" id="IPR023051">
    <property type="entry name" value="Kup"/>
</dbReference>
<dbReference type="PANTHER" id="PTHR30540:SF79">
    <property type="entry name" value="LOW AFFINITY POTASSIUM TRANSPORT SYSTEM PROTEIN KUP"/>
    <property type="match status" value="1"/>
</dbReference>
<dbReference type="PANTHER" id="PTHR30540">
    <property type="entry name" value="OSMOTIC STRESS POTASSIUM TRANSPORTER"/>
    <property type="match status" value="1"/>
</dbReference>
<dbReference type="Pfam" id="PF02705">
    <property type="entry name" value="K_trans"/>
    <property type="match status" value="1"/>
</dbReference>
<dbReference type="Pfam" id="PF22776">
    <property type="entry name" value="K_trans_C"/>
    <property type="match status" value="1"/>
</dbReference>
<comment type="function">
    <text evidence="1">Transport of potassium into the cell. Likely operates as a K(+):H(+) symporter.</text>
</comment>
<comment type="catalytic activity">
    <reaction evidence="1">
        <text>K(+)(in) + H(+)(in) = K(+)(out) + H(+)(out)</text>
        <dbReference type="Rhea" id="RHEA:28490"/>
        <dbReference type="ChEBI" id="CHEBI:15378"/>
        <dbReference type="ChEBI" id="CHEBI:29103"/>
    </reaction>
    <physiologicalReaction direction="right-to-left" evidence="1">
        <dbReference type="Rhea" id="RHEA:28492"/>
    </physiologicalReaction>
</comment>
<comment type="subcellular location">
    <subcellularLocation>
        <location evidence="1">Cell inner membrane</location>
        <topology evidence="1">Multi-pass membrane protein</topology>
    </subcellularLocation>
</comment>
<comment type="similarity">
    <text evidence="1">Belongs to the HAK/KUP transporter (TC 2.A.72) family.</text>
</comment>
<gene>
    <name evidence="1" type="primary">kup</name>
    <name type="synonym">trkD</name>
    <name type="ordered locus">BPP2540</name>
</gene>
<evidence type="ECO:0000255" key="1">
    <source>
        <dbReference type="HAMAP-Rule" id="MF_01522"/>
    </source>
</evidence>
<reference key="1">
    <citation type="journal article" date="2003" name="Nat. Genet.">
        <title>Comparative analysis of the genome sequences of Bordetella pertussis, Bordetella parapertussis and Bordetella bronchiseptica.</title>
        <authorList>
            <person name="Parkhill J."/>
            <person name="Sebaihia M."/>
            <person name="Preston A."/>
            <person name="Murphy L.D."/>
            <person name="Thomson N.R."/>
            <person name="Harris D.E."/>
            <person name="Holden M.T.G."/>
            <person name="Churcher C.M."/>
            <person name="Bentley S.D."/>
            <person name="Mungall K.L."/>
            <person name="Cerdeno-Tarraga A.-M."/>
            <person name="Temple L."/>
            <person name="James K.D."/>
            <person name="Harris B."/>
            <person name="Quail M.A."/>
            <person name="Achtman M."/>
            <person name="Atkin R."/>
            <person name="Baker S."/>
            <person name="Basham D."/>
            <person name="Bason N."/>
            <person name="Cherevach I."/>
            <person name="Chillingworth T."/>
            <person name="Collins M."/>
            <person name="Cronin A."/>
            <person name="Davis P."/>
            <person name="Doggett J."/>
            <person name="Feltwell T."/>
            <person name="Goble A."/>
            <person name="Hamlin N."/>
            <person name="Hauser H."/>
            <person name="Holroyd S."/>
            <person name="Jagels K."/>
            <person name="Leather S."/>
            <person name="Moule S."/>
            <person name="Norberczak H."/>
            <person name="O'Neil S."/>
            <person name="Ormond D."/>
            <person name="Price C."/>
            <person name="Rabbinowitsch E."/>
            <person name="Rutter S."/>
            <person name="Sanders M."/>
            <person name="Saunders D."/>
            <person name="Seeger K."/>
            <person name="Sharp S."/>
            <person name="Simmonds M."/>
            <person name="Skelton J."/>
            <person name="Squares R."/>
            <person name="Squares S."/>
            <person name="Stevens K."/>
            <person name="Unwin L."/>
            <person name="Whitehead S."/>
            <person name="Barrell B.G."/>
            <person name="Maskell D.J."/>
        </authorList>
    </citation>
    <scope>NUCLEOTIDE SEQUENCE [LARGE SCALE GENOMIC DNA]</scope>
    <source>
        <strain>12822 / ATCC BAA-587 / NCTC 13253</strain>
    </source>
</reference>
<feature type="chain" id="PRO_0000208996" description="Probable potassium transport system protein Kup">
    <location>
        <begin position="1"/>
        <end position="636"/>
    </location>
</feature>
<feature type="transmembrane region" description="Helical" evidence="1">
    <location>
        <begin position="23"/>
        <end position="43"/>
    </location>
</feature>
<feature type="transmembrane region" description="Helical" evidence="1">
    <location>
        <begin position="57"/>
        <end position="77"/>
    </location>
</feature>
<feature type="transmembrane region" description="Helical" evidence="1">
    <location>
        <begin position="111"/>
        <end position="131"/>
    </location>
</feature>
<feature type="transmembrane region" description="Helical" evidence="1">
    <location>
        <begin position="148"/>
        <end position="168"/>
    </location>
</feature>
<feature type="transmembrane region" description="Helical" evidence="1">
    <location>
        <begin position="179"/>
        <end position="199"/>
    </location>
</feature>
<feature type="transmembrane region" description="Helical" evidence="1">
    <location>
        <begin position="217"/>
        <end position="237"/>
    </location>
</feature>
<feature type="transmembrane region" description="Helical" evidence="1">
    <location>
        <begin position="258"/>
        <end position="278"/>
    </location>
</feature>
<feature type="transmembrane region" description="Helical" evidence="1">
    <location>
        <begin position="287"/>
        <end position="307"/>
    </location>
</feature>
<feature type="transmembrane region" description="Helical" evidence="1">
    <location>
        <begin position="348"/>
        <end position="368"/>
    </location>
</feature>
<feature type="transmembrane region" description="Helical" evidence="1">
    <location>
        <begin position="377"/>
        <end position="397"/>
    </location>
</feature>
<feature type="transmembrane region" description="Helical" evidence="1">
    <location>
        <begin position="409"/>
        <end position="429"/>
    </location>
</feature>
<feature type="transmembrane region" description="Helical" evidence="1">
    <location>
        <begin position="431"/>
        <end position="451"/>
    </location>
</feature>
<proteinExistence type="inferred from homology"/>